<sequence length="533" mass="59726">MAMTLLPRHGKTHLANIPYGYYTATVSLIFIILLIGARKLIPVRQRNRSKWAKWALSSARGGSPLLYLVVLFVALLVPFVHHYSLLGYVGLYLKRLGRLSYVLATLNLFLTLRPNFLLPGYVYLDLIPLHKWLSRSLCLLALVHGVGFLVKWALDSQVSFVAKAFYNIPNLAGLVVGALMAFMVLLSVRPVRRFSYRSFYLTHIIGAWVFVFLTAYHARPGVFVPYTLLNAGLFVFYILSKTVPARGVELVSKSTDDVNNCLTRIVLPRKAMPEHFAPGSHLRISPYRRVNPLYYMLPSHPYTVASMPEDKDVELIVREHASGFHLLTGLGYTIQNHYESVPRQCLQSATRIALVCGGSGLSYALPIFRHFASEEKADQVKYLRLIWLVRDKYDVNVLGNIRSLASSVAQFDIFVTRSVPPDDTVESGSKLSPAQQQSPITDDLEFELESFGDQLDQNGALITPEIPNLPSGLASSFHFGRKLDWMTDLAQFVEREDLGSTWLVACGPKGLNDAAKLYAQQNEINLASETYAL</sequence>
<accession>C5E398</accession>
<comment type="function">
    <text evidence="1">Probable cell surface metalloreductase. May be involved in iron or copper homeostasis (By similarity).</text>
</comment>
<comment type="subcellular location">
    <subcellularLocation>
        <location evidence="1">Membrane</location>
        <topology evidence="1">Multi-pass membrane protein</topology>
    </subcellularLocation>
</comment>
<comment type="similarity">
    <text evidence="3">Belongs to the ferric reductase (FRE) family. AIM14 subfamily.</text>
</comment>
<dbReference type="EC" id="1.16.1.-"/>
<dbReference type="EMBL" id="CU928180">
    <property type="protein sequence ID" value="CAR30509.1"/>
    <property type="molecule type" value="Genomic_DNA"/>
</dbReference>
<dbReference type="RefSeq" id="XP_002556371.1">
    <property type="nucleotide sequence ID" value="XM_002556325.1"/>
</dbReference>
<dbReference type="SMR" id="C5E398"/>
<dbReference type="FunCoup" id="C5E398">
    <property type="interactions" value="23"/>
</dbReference>
<dbReference type="GeneID" id="8294705"/>
<dbReference type="KEGG" id="lth:KLTH0H11550g"/>
<dbReference type="eggNOG" id="KOG0039">
    <property type="taxonomic scope" value="Eukaryota"/>
</dbReference>
<dbReference type="HOGENOM" id="CLU_036508_0_0_1"/>
<dbReference type="InParanoid" id="C5E398"/>
<dbReference type="OMA" id="GRMAYCL"/>
<dbReference type="OrthoDB" id="17725at2759"/>
<dbReference type="Proteomes" id="UP000002036">
    <property type="component" value="Chromosome H"/>
</dbReference>
<dbReference type="GO" id="GO:0005886">
    <property type="term" value="C:plasma membrane"/>
    <property type="evidence" value="ECO:0007669"/>
    <property type="project" value="TreeGrafter"/>
</dbReference>
<dbReference type="GO" id="GO:0000293">
    <property type="term" value="F:ferric-chelate reductase activity"/>
    <property type="evidence" value="ECO:0007669"/>
    <property type="project" value="TreeGrafter"/>
</dbReference>
<dbReference type="GO" id="GO:0033215">
    <property type="term" value="P:reductive iron assimilation"/>
    <property type="evidence" value="ECO:0007669"/>
    <property type="project" value="TreeGrafter"/>
</dbReference>
<dbReference type="CDD" id="cd06186">
    <property type="entry name" value="NOX_Duox_like_FAD_NADP"/>
    <property type="match status" value="1"/>
</dbReference>
<dbReference type="Gene3D" id="3.40.50.80">
    <property type="entry name" value="Nucleotide-binding domain of ferredoxin-NADP reductase (FNR) module"/>
    <property type="match status" value="1"/>
</dbReference>
<dbReference type="InterPro" id="IPR013112">
    <property type="entry name" value="FAD-bd_8"/>
</dbReference>
<dbReference type="InterPro" id="IPR013130">
    <property type="entry name" value="Fe3_Rdtase_TM_dom"/>
</dbReference>
<dbReference type="InterPro" id="IPR013121">
    <property type="entry name" value="Fe_red_NAD-bd_6"/>
</dbReference>
<dbReference type="InterPro" id="IPR039261">
    <property type="entry name" value="FNR_nucleotide-bd"/>
</dbReference>
<dbReference type="InterPro" id="IPR050369">
    <property type="entry name" value="RBOH/FRE"/>
</dbReference>
<dbReference type="PANTHER" id="PTHR11972:SF198">
    <property type="entry name" value="METALLOREDUCTASE AIM14-RELATED"/>
    <property type="match status" value="1"/>
</dbReference>
<dbReference type="PANTHER" id="PTHR11972">
    <property type="entry name" value="NADPH OXIDASE"/>
    <property type="match status" value="1"/>
</dbReference>
<dbReference type="Pfam" id="PF08022">
    <property type="entry name" value="FAD_binding_8"/>
    <property type="match status" value="1"/>
</dbReference>
<dbReference type="Pfam" id="PF01794">
    <property type="entry name" value="Ferric_reduct"/>
    <property type="match status" value="1"/>
</dbReference>
<dbReference type="Pfam" id="PF08030">
    <property type="entry name" value="NAD_binding_6"/>
    <property type="match status" value="1"/>
</dbReference>
<dbReference type="SFLD" id="SFLDF00463">
    <property type="entry name" value="AIM14"/>
    <property type="match status" value="1"/>
</dbReference>
<dbReference type="SFLD" id="SFLDS00052">
    <property type="entry name" value="Ferric_Reductase_Domain"/>
    <property type="match status" value="1"/>
</dbReference>
<dbReference type="SFLD" id="SFLDG01168">
    <property type="entry name" value="Ferric_reductase_subgroup_(FRE"/>
    <property type="match status" value="1"/>
</dbReference>
<dbReference type="SUPFAM" id="SSF52343">
    <property type="entry name" value="Ferredoxin reductase-like, C-terminal NADP-linked domain"/>
    <property type="match status" value="1"/>
</dbReference>
<keyword id="KW-0249">Electron transport</keyword>
<keyword id="KW-0274">FAD</keyword>
<keyword id="KW-0285">Flavoprotein</keyword>
<keyword id="KW-0406">Ion transport</keyword>
<keyword id="KW-0472">Membrane</keyword>
<keyword id="KW-0521">NADP</keyword>
<keyword id="KW-0560">Oxidoreductase</keyword>
<keyword id="KW-1185">Reference proteome</keyword>
<keyword id="KW-0812">Transmembrane</keyword>
<keyword id="KW-1133">Transmembrane helix</keyword>
<keyword id="KW-0813">Transport</keyword>
<organism>
    <name type="scientific">Lachancea thermotolerans (strain ATCC 56472 / CBS 6340 / NRRL Y-8284)</name>
    <name type="common">Yeast</name>
    <name type="synonym">Kluyveromyces thermotolerans</name>
    <dbReference type="NCBI Taxonomy" id="559295"/>
    <lineage>
        <taxon>Eukaryota</taxon>
        <taxon>Fungi</taxon>
        <taxon>Dikarya</taxon>
        <taxon>Ascomycota</taxon>
        <taxon>Saccharomycotina</taxon>
        <taxon>Saccharomycetes</taxon>
        <taxon>Saccharomycetales</taxon>
        <taxon>Saccharomycetaceae</taxon>
        <taxon>Lachancea</taxon>
    </lineage>
</organism>
<proteinExistence type="inferred from homology"/>
<evidence type="ECO:0000250" key="1"/>
<evidence type="ECO:0000255" key="2"/>
<evidence type="ECO:0000305" key="3"/>
<gene>
    <name type="primary">AIM14</name>
    <name type="ordered locus">KLTH0H11550g</name>
</gene>
<protein>
    <recommendedName>
        <fullName>Probable metalloreductase AIM14</fullName>
        <ecNumber>1.16.1.-</ecNumber>
    </recommendedName>
</protein>
<name>AIM14_LACTC</name>
<feature type="chain" id="PRO_0000408746" description="Probable metalloreductase AIM14">
    <location>
        <begin position="1"/>
        <end position="533"/>
    </location>
</feature>
<feature type="transmembrane region" description="Helical" evidence="2">
    <location>
        <begin position="17"/>
        <end position="37"/>
    </location>
</feature>
<feature type="transmembrane region" description="Helical" evidence="2">
    <location>
        <begin position="61"/>
        <end position="81"/>
    </location>
</feature>
<feature type="transmembrane region" description="Helical" evidence="2">
    <location>
        <begin position="102"/>
        <end position="122"/>
    </location>
</feature>
<feature type="transmembrane region" description="Helical" evidence="2">
    <location>
        <begin position="136"/>
        <end position="156"/>
    </location>
</feature>
<feature type="transmembrane region" description="Helical" evidence="2">
    <location>
        <begin position="168"/>
        <end position="188"/>
    </location>
</feature>
<feature type="transmembrane region" description="Helical" evidence="2">
    <location>
        <begin position="198"/>
        <end position="218"/>
    </location>
</feature>
<feature type="transmembrane region" description="Helical" evidence="2">
    <location>
        <begin position="220"/>
        <end position="240"/>
    </location>
</feature>
<feature type="domain" description="Ferric oxidoreductase">
    <location>
        <begin position="96"/>
        <end position="213"/>
    </location>
</feature>
<feature type="domain" description="FAD-binding FR-type">
    <location>
        <begin position="240"/>
        <end position="366"/>
    </location>
</feature>
<reference key="1">
    <citation type="journal article" date="2009" name="Genome Res.">
        <title>Comparative genomics of protoploid Saccharomycetaceae.</title>
        <authorList>
            <consortium name="The Genolevures Consortium"/>
            <person name="Souciet J.-L."/>
            <person name="Dujon B."/>
            <person name="Gaillardin C."/>
            <person name="Johnston M."/>
            <person name="Baret P.V."/>
            <person name="Cliften P."/>
            <person name="Sherman D.J."/>
            <person name="Weissenbach J."/>
            <person name="Westhof E."/>
            <person name="Wincker P."/>
            <person name="Jubin C."/>
            <person name="Poulain J."/>
            <person name="Barbe V."/>
            <person name="Segurens B."/>
            <person name="Artiguenave F."/>
            <person name="Anthouard V."/>
            <person name="Vacherie B."/>
            <person name="Val M.-E."/>
            <person name="Fulton R.S."/>
            <person name="Minx P."/>
            <person name="Wilson R."/>
            <person name="Durrens P."/>
            <person name="Jean G."/>
            <person name="Marck C."/>
            <person name="Martin T."/>
            <person name="Nikolski M."/>
            <person name="Rolland T."/>
            <person name="Seret M.-L."/>
            <person name="Casaregola S."/>
            <person name="Despons L."/>
            <person name="Fairhead C."/>
            <person name="Fischer G."/>
            <person name="Lafontaine I."/>
            <person name="Leh V."/>
            <person name="Lemaire M."/>
            <person name="de Montigny J."/>
            <person name="Neuveglise C."/>
            <person name="Thierry A."/>
            <person name="Blanc-Lenfle I."/>
            <person name="Bleykasten C."/>
            <person name="Diffels J."/>
            <person name="Fritsch E."/>
            <person name="Frangeul L."/>
            <person name="Goeffon A."/>
            <person name="Jauniaux N."/>
            <person name="Kachouri-Lafond R."/>
            <person name="Payen C."/>
            <person name="Potier S."/>
            <person name="Pribylova L."/>
            <person name="Ozanne C."/>
            <person name="Richard G.-F."/>
            <person name="Sacerdot C."/>
            <person name="Straub M.-L."/>
            <person name="Talla E."/>
        </authorList>
    </citation>
    <scope>NUCLEOTIDE SEQUENCE [LARGE SCALE GENOMIC DNA]</scope>
    <source>
        <strain>ATCC 56472 / CBS 6340 / NRRL Y-8284</strain>
    </source>
</reference>